<proteinExistence type="inferred from homology"/>
<protein>
    <recommendedName>
        <fullName evidence="1">UPF0756 membrane protein MS1439</fullName>
    </recommendedName>
</protein>
<organism>
    <name type="scientific">Mannheimia succiniciproducens (strain KCTC 0769BP / MBEL55E)</name>
    <dbReference type="NCBI Taxonomy" id="221988"/>
    <lineage>
        <taxon>Bacteria</taxon>
        <taxon>Pseudomonadati</taxon>
        <taxon>Pseudomonadota</taxon>
        <taxon>Gammaproteobacteria</taxon>
        <taxon>Pasteurellales</taxon>
        <taxon>Pasteurellaceae</taxon>
        <taxon>Basfia</taxon>
    </lineage>
</organism>
<evidence type="ECO:0000255" key="1">
    <source>
        <dbReference type="HAMAP-Rule" id="MF_01874"/>
    </source>
</evidence>
<keyword id="KW-1003">Cell membrane</keyword>
<keyword id="KW-0472">Membrane</keyword>
<keyword id="KW-0812">Transmembrane</keyword>
<keyword id="KW-1133">Transmembrane helix</keyword>
<dbReference type="EMBL" id="AE016827">
    <property type="protein sequence ID" value="AAU38046.1"/>
    <property type="molecule type" value="Genomic_DNA"/>
</dbReference>
<dbReference type="RefSeq" id="WP_011200613.1">
    <property type="nucleotide sequence ID" value="NC_006300.1"/>
</dbReference>
<dbReference type="STRING" id="221988.MS1439"/>
<dbReference type="KEGG" id="msu:MS1439"/>
<dbReference type="eggNOG" id="COG2707">
    <property type="taxonomic scope" value="Bacteria"/>
</dbReference>
<dbReference type="HOGENOM" id="CLU_125889_0_0_6"/>
<dbReference type="OrthoDB" id="80306at2"/>
<dbReference type="Proteomes" id="UP000000607">
    <property type="component" value="Chromosome"/>
</dbReference>
<dbReference type="GO" id="GO:0005886">
    <property type="term" value="C:plasma membrane"/>
    <property type="evidence" value="ECO:0007669"/>
    <property type="project" value="UniProtKB-SubCell"/>
</dbReference>
<dbReference type="HAMAP" id="MF_01874">
    <property type="entry name" value="UPF0756"/>
    <property type="match status" value="1"/>
</dbReference>
<dbReference type="InterPro" id="IPR007382">
    <property type="entry name" value="UPF0756_TM"/>
</dbReference>
<dbReference type="PANTHER" id="PTHR38452">
    <property type="entry name" value="UPF0756 MEMBRANE PROTEIN YEAL"/>
    <property type="match status" value="1"/>
</dbReference>
<dbReference type="PANTHER" id="PTHR38452:SF1">
    <property type="entry name" value="UPF0756 MEMBRANE PROTEIN YEAL"/>
    <property type="match status" value="1"/>
</dbReference>
<dbReference type="Pfam" id="PF04284">
    <property type="entry name" value="DUF441"/>
    <property type="match status" value="1"/>
</dbReference>
<name>Y1439_MANSM</name>
<gene>
    <name type="ordered locus">MS1439</name>
</gene>
<reference key="1">
    <citation type="journal article" date="2004" name="Nat. Biotechnol.">
        <title>The genome sequence of the capnophilic rumen bacterium Mannheimia succiniciproducens.</title>
        <authorList>
            <person name="Hong S.H."/>
            <person name="Kim J.S."/>
            <person name="Lee S.Y."/>
            <person name="In Y.H."/>
            <person name="Choi S.S."/>
            <person name="Rih J.-K."/>
            <person name="Kim C.H."/>
            <person name="Jeong H."/>
            <person name="Hur C.G."/>
            <person name="Kim J.J."/>
        </authorList>
    </citation>
    <scope>NUCLEOTIDE SEQUENCE [LARGE SCALE GENOMIC DNA]</scope>
    <source>
        <strain>KCTC 0769BP / MBEL55E</strain>
    </source>
</reference>
<sequence length="149" mass="15600">MSLQVNSVAIMLVVLILLGVLSNNNSITISALILLLMHQTFLGKYIPFLEKNGLKVGIIILTVGVLAPLVSGKVQLPAFKEFLNWQMFLSIVIGIAVAWFAGRGVNLMSSEPIVVTGLLIGTVLGVAFLGGIPVGPLIAAGILAVILGK</sequence>
<feature type="chain" id="PRO_0000388906" description="UPF0756 membrane protein MS1439">
    <location>
        <begin position="1"/>
        <end position="149"/>
    </location>
</feature>
<feature type="transmembrane region" description="Helical" evidence="1">
    <location>
        <begin position="10"/>
        <end position="32"/>
    </location>
</feature>
<feature type="transmembrane region" description="Helical" evidence="1">
    <location>
        <begin position="56"/>
        <end position="76"/>
    </location>
</feature>
<feature type="transmembrane region" description="Helical" evidence="1">
    <location>
        <begin position="82"/>
        <end position="102"/>
    </location>
</feature>
<feature type="transmembrane region" description="Helical" evidence="1">
    <location>
        <begin position="126"/>
        <end position="146"/>
    </location>
</feature>
<accession>Q65SL4</accession>
<comment type="subcellular location">
    <subcellularLocation>
        <location evidence="1">Cell membrane</location>
        <topology evidence="1">Multi-pass membrane protein</topology>
    </subcellularLocation>
</comment>
<comment type="similarity">
    <text evidence="1">Belongs to the UPF0756 family.</text>
</comment>